<gene>
    <name type="primary">NOP9</name>
    <name type="ORF">BDBG_02872</name>
</gene>
<proteinExistence type="inferred from homology"/>
<reference key="1">
    <citation type="journal article" date="2015" name="PLoS Genet.">
        <title>The dynamic genome and transcriptome of the human fungal pathogen Blastomyces and close relative Emmonsia.</title>
        <authorList>
            <person name="Munoz J.F."/>
            <person name="Gauthier G.M."/>
            <person name="Desjardins C.A."/>
            <person name="Gallo J.E."/>
            <person name="Holder J."/>
            <person name="Sullivan T.D."/>
            <person name="Marty A.J."/>
            <person name="Carmen J.C."/>
            <person name="Chen Z."/>
            <person name="Ding L."/>
            <person name="Gujja S."/>
            <person name="Magrini V."/>
            <person name="Misas E."/>
            <person name="Mitreva M."/>
            <person name="Priest M."/>
            <person name="Saif S."/>
            <person name="Whiston E.A."/>
            <person name="Young S."/>
            <person name="Zeng Q."/>
            <person name="Goldman W.E."/>
            <person name="Mardis E.R."/>
            <person name="Taylor J.W."/>
            <person name="McEwen J.G."/>
            <person name="Clay O.K."/>
            <person name="Klein B.S."/>
            <person name="Cuomo C.A."/>
        </authorList>
    </citation>
    <scope>NUCLEOTIDE SEQUENCE [LARGE SCALE GENOMIC DNA]</scope>
    <source>
        <strain>SLH14081</strain>
    </source>
</reference>
<feature type="chain" id="PRO_0000407792" description="Nucleolar protein 9">
    <location>
        <begin position="1"/>
        <end position="682"/>
    </location>
</feature>
<feature type="repeat" description="Pumilio 1">
    <location>
        <begin position="108"/>
        <end position="143"/>
    </location>
</feature>
<feature type="repeat" description="Pumilio 2">
    <location>
        <begin position="347"/>
        <end position="382"/>
    </location>
</feature>
<feature type="repeat" description="Pumilio 3">
    <location>
        <begin position="383"/>
        <end position="419"/>
    </location>
</feature>
<feature type="repeat" description="Pumilio 4">
    <location>
        <begin position="524"/>
        <end position="562"/>
    </location>
</feature>
<feature type="repeat" description="Pumilio 5">
    <location>
        <begin position="563"/>
        <end position="600"/>
    </location>
</feature>
<feature type="region of interest" description="Disordered" evidence="2">
    <location>
        <begin position="1"/>
        <end position="46"/>
    </location>
</feature>
<feature type="region of interest" description="Disordered" evidence="2">
    <location>
        <begin position="249"/>
        <end position="272"/>
    </location>
</feature>
<feature type="compositionally biased region" description="Basic residues" evidence="2">
    <location>
        <begin position="1"/>
        <end position="15"/>
    </location>
</feature>
<feature type="compositionally biased region" description="Basic and acidic residues" evidence="2">
    <location>
        <begin position="16"/>
        <end position="35"/>
    </location>
</feature>
<feature type="compositionally biased region" description="Basic and acidic residues" evidence="2">
    <location>
        <begin position="250"/>
        <end position="272"/>
    </location>
</feature>
<dbReference type="EMBL" id="GG657451">
    <property type="protein sequence ID" value="OAT06704.1"/>
    <property type="molecule type" value="Genomic_DNA"/>
</dbReference>
<dbReference type="RefSeq" id="XP_002626695.1">
    <property type="nucleotide sequence ID" value="XM_002626649.1"/>
</dbReference>
<dbReference type="SMR" id="C5JK19"/>
<dbReference type="STRING" id="559298.C5JK19"/>
<dbReference type="GeneID" id="8510002"/>
<dbReference type="KEGG" id="bgh:BDBG_02872"/>
<dbReference type="VEuPathDB" id="FungiDB:BDBG_02872"/>
<dbReference type="HOGENOM" id="CLU_008720_1_1_1"/>
<dbReference type="OrthoDB" id="392571at2759"/>
<dbReference type="Proteomes" id="UP000002038">
    <property type="component" value="Unassembled WGS sequence"/>
</dbReference>
<dbReference type="GO" id="GO:0030686">
    <property type="term" value="C:90S preribosome"/>
    <property type="evidence" value="ECO:0007669"/>
    <property type="project" value="TreeGrafter"/>
</dbReference>
<dbReference type="GO" id="GO:0005730">
    <property type="term" value="C:nucleolus"/>
    <property type="evidence" value="ECO:0007669"/>
    <property type="project" value="UniProtKB-SubCell"/>
</dbReference>
<dbReference type="GO" id="GO:0030688">
    <property type="term" value="C:preribosome, small subunit precursor"/>
    <property type="evidence" value="ECO:0007669"/>
    <property type="project" value="TreeGrafter"/>
</dbReference>
<dbReference type="GO" id="GO:0003723">
    <property type="term" value="F:RNA binding"/>
    <property type="evidence" value="ECO:0007669"/>
    <property type="project" value="InterPro"/>
</dbReference>
<dbReference type="GO" id="GO:0000480">
    <property type="term" value="P:endonucleolytic cleavage in 5'-ETS of tricistronic rRNA transcript (SSU-rRNA, 5.8S rRNA, LSU-rRNA)"/>
    <property type="evidence" value="ECO:0007669"/>
    <property type="project" value="TreeGrafter"/>
</dbReference>
<dbReference type="GO" id="GO:0000447">
    <property type="term" value="P:endonucleolytic cleavage in ITS1 to separate SSU-rRNA from 5.8S rRNA and LSU-rRNA from tricistronic rRNA transcript (SSU-rRNA, 5.8S rRNA, LSU-rRNA)"/>
    <property type="evidence" value="ECO:0007669"/>
    <property type="project" value="TreeGrafter"/>
</dbReference>
<dbReference type="GO" id="GO:0000472">
    <property type="term" value="P:endonucleolytic cleavage to generate mature 5'-end of SSU-rRNA from (SSU-rRNA, 5.8S rRNA, LSU-rRNA)"/>
    <property type="evidence" value="ECO:0007669"/>
    <property type="project" value="TreeGrafter"/>
</dbReference>
<dbReference type="GO" id="GO:0000056">
    <property type="term" value="P:ribosomal small subunit export from nucleus"/>
    <property type="evidence" value="ECO:0007669"/>
    <property type="project" value="TreeGrafter"/>
</dbReference>
<dbReference type="Gene3D" id="1.25.10.10">
    <property type="entry name" value="Leucine-rich Repeat Variant"/>
    <property type="match status" value="3"/>
</dbReference>
<dbReference type="InterPro" id="IPR011989">
    <property type="entry name" value="ARM-like"/>
</dbReference>
<dbReference type="InterPro" id="IPR016024">
    <property type="entry name" value="ARM-type_fold"/>
</dbReference>
<dbReference type="InterPro" id="IPR040000">
    <property type="entry name" value="NOP9"/>
</dbReference>
<dbReference type="InterPro" id="IPR001313">
    <property type="entry name" value="Pumilio_RNA-bd_rpt"/>
</dbReference>
<dbReference type="PANTHER" id="PTHR13102">
    <property type="entry name" value="NUCLEOLAR PROTEIN 9"/>
    <property type="match status" value="1"/>
</dbReference>
<dbReference type="PANTHER" id="PTHR13102:SF0">
    <property type="entry name" value="NUCLEOLAR PROTEIN 9"/>
    <property type="match status" value="1"/>
</dbReference>
<dbReference type="Pfam" id="PF22493">
    <property type="entry name" value="PUF_NOP9"/>
    <property type="match status" value="1"/>
</dbReference>
<dbReference type="SMART" id="SM00025">
    <property type="entry name" value="Pumilio"/>
    <property type="match status" value="5"/>
</dbReference>
<dbReference type="SUPFAM" id="SSF48371">
    <property type="entry name" value="ARM repeat"/>
    <property type="match status" value="1"/>
</dbReference>
<name>NOP9_BLAGS</name>
<protein>
    <recommendedName>
        <fullName>Nucleolar protein 9</fullName>
    </recommendedName>
    <alternativeName>
        <fullName>Pumilio domain-containing protein NOP9</fullName>
    </alternativeName>
</protein>
<sequence length="682" mass="76477">MPRERQKRGRRAEAKRKRDDEVGDRTAPKRQKASEGDNDFNPLHSQAKIGDDYIPLEEEPASSMDTPFYGLLDPDEQEYFSHASGLLELNQFETEEEKSIFIERVYEEADGKELKIACSQSCSRLMEKLISASTVSQIKSLFNKFVGQFLNLVQHRFASHCCESLFLRAAPYVTLEMKKNSAEKNDNECEDSSANLRLEDLFLAVLSELEGNWGYLLTERFASHTIRVLLLILAGEQLDNPSKATVIASRKKENLDKPKVTQRDKSASDRRAVPPSFNAALEKMMNDLVTGLDNTYLRALATHPVGNPVLQVLLSVELTHLGKSKARDPDSVFRRLVPDENLEEGSESAAFIKGLFYDPVGSRLLETMVQLAPGKFFKTFYKALVLERIGSLSRNEIAGHVVARILERLSKEDLKSSMDLILPEVLSLVKRSRFTVIKTLIERGVIRGVDLRPLADSLLLAFGTDPIARINNVLKLHHLNEENDDTKRSSKNSTPEQLHGSLLAQTMLKAPGPLSELIQSSLLAVTLETLIAIAKDPVASHVLQDALTLPTSTIQFRRQITSRFSGKMAELALDSSGSHVVDAVWSATENLIFIKQRFAEELLANERPLRDSFVGRAVWKNWSMDLYKRRRGHWIAVAKGLESVNPSNSENRQPPKSNLDLARARFAEKSNTSTPKKISATF</sequence>
<keyword id="KW-0539">Nucleus</keyword>
<keyword id="KW-1185">Reference proteome</keyword>
<keyword id="KW-0677">Repeat</keyword>
<keyword id="KW-0690">Ribosome biogenesis</keyword>
<keyword id="KW-0698">rRNA processing</keyword>
<evidence type="ECO:0000250" key="1"/>
<evidence type="ECO:0000256" key="2">
    <source>
        <dbReference type="SAM" id="MobiDB-lite"/>
    </source>
</evidence>
<evidence type="ECO:0000305" key="3"/>
<comment type="function">
    <text evidence="1">RNA-binding nucleolar protein required for pre-rRNA processing. Involved in production of 18S rRNA and assembly of small ribosomal subunit (By similarity).</text>
</comment>
<comment type="subcellular location">
    <subcellularLocation>
        <location evidence="1">Nucleus</location>
        <location evidence="1">Nucleolus</location>
    </subcellularLocation>
</comment>
<comment type="similarity">
    <text evidence="3">Belongs to the NOP9 family.</text>
</comment>
<organism>
    <name type="scientific">Blastomyces gilchristii (strain SLH14081)</name>
    <name type="common">Blastomyces dermatitidis</name>
    <dbReference type="NCBI Taxonomy" id="559298"/>
    <lineage>
        <taxon>Eukaryota</taxon>
        <taxon>Fungi</taxon>
        <taxon>Dikarya</taxon>
        <taxon>Ascomycota</taxon>
        <taxon>Pezizomycotina</taxon>
        <taxon>Eurotiomycetes</taxon>
        <taxon>Eurotiomycetidae</taxon>
        <taxon>Onygenales</taxon>
        <taxon>Ajellomycetaceae</taxon>
        <taxon>Blastomyces</taxon>
    </lineage>
</organism>
<accession>C5JK19</accession>
<accession>A0A179UFF3</accession>